<keyword id="KW-1185">Reference proteome</keyword>
<protein>
    <recommendedName>
        <fullName>Uncharacterized protein L278</fullName>
    </recommendedName>
</protein>
<organism>
    <name type="scientific">Acanthamoeba polyphaga mimivirus</name>
    <name type="common">APMV</name>
    <dbReference type="NCBI Taxonomy" id="212035"/>
    <lineage>
        <taxon>Viruses</taxon>
        <taxon>Varidnaviria</taxon>
        <taxon>Bamfordvirae</taxon>
        <taxon>Nucleocytoviricota</taxon>
        <taxon>Megaviricetes</taxon>
        <taxon>Imitervirales</taxon>
        <taxon>Mimiviridae</taxon>
        <taxon>Megamimivirinae</taxon>
        <taxon>Mimivirus</taxon>
        <taxon>Mimivirus bradfordmassiliense</taxon>
    </lineage>
</organism>
<proteinExistence type="predicted"/>
<gene>
    <name type="ordered locus">MIMI_L278</name>
</gene>
<sequence>MEHCIENANLLYVKTQISKVKINEKYNAVKILFKDTDKYNIISAEADCCSESWFYFFEDKKLASIVGKSIKNIEYCKDIDLPPSNVQECDINSLYRMNFTDGTYFEFVLRNSSNGYYCGWLEVHRY</sequence>
<dbReference type="EMBL" id="AY653733">
    <property type="protein sequence ID" value="AAV50550.1"/>
    <property type="molecule type" value="Genomic_DNA"/>
</dbReference>
<dbReference type="KEGG" id="vg:9924892"/>
<dbReference type="OrthoDB" id="13014at10239"/>
<dbReference type="Proteomes" id="UP000001134">
    <property type="component" value="Genome"/>
</dbReference>
<dbReference type="InterPro" id="IPR055871">
    <property type="entry name" value="DUF7448"/>
</dbReference>
<dbReference type="Pfam" id="PF24240">
    <property type="entry name" value="DUF7448"/>
    <property type="match status" value="1"/>
</dbReference>
<organismHost>
    <name type="scientific">Acanthamoeba polyphaga</name>
    <name type="common">Amoeba</name>
    <dbReference type="NCBI Taxonomy" id="5757"/>
</organismHost>
<accession>Q5UPV6</accession>
<reference key="1">
    <citation type="journal article" date="2004" name="Science">
        <title>The 1.2-megabase genome sequence of Mimivirus.</title>
        <authorList>
            <person name="Raoult D."/>
            <person name="Audic S."/>
            <person name="Robert C."/>
            <person name="Abergel C."/>
            <person name="Renesto P."/>
            <person name="Ogata H."/>
            <person name="La Scola B."/>
            <person name="Susan M."/>
            <person name="Claverie J.-M."/>
        </authorList>
    </citation>
    <scope>NUCLEOTIDE SEQUENCE [LARGE SCALE GENOMIC DNA]</scope>
    <source>
        <strain>Rowbotham-Bradford</strain>
    </source>
</reference>
<feature type="chain" id="PRO_0000251112" description="Uncharacterized protein L278">
    <location>
        <begin position="1"/>
        <end position="126"/>
    </location>
</feature>
<name>YL278_MIMIV</name>